<dbReference type="EMBL" id="CP000970">
    <property type="protein sequence ID" value="ACB19835.1"/>
    <property type="molecule type" value="Genomic_DNA"/>
</dbReference>
<dbReference type="RefSeq" id="WP_000272188.1">
    <property type="nucleotide sequence ID" value="NC_010498.1"/>
</dbReference>
<dbReference type="SMR" id="B1LGW6"/>
<dbReference type="KEGG" id="ecm:EcSMS35_0175"/>
<dbReference type="HOGENOM" id="CLU_136774_0_0_6"/>
<dbReference type="Proteomes" id="UP000007011">
    <property type="component" value="Chromosome"/>
</dbReference>
<dbReference type="HAMAP" id="MF_01519">
    <property type="entry name" value="UPF0325"/>
    <property type="match status" value="1"/>
</dbReference>
<dbReference type="InterPro" id="IPR020911">
    <property type="entry name" value="UPF0325"/>
</dbReference>
<dbReference type="NCBIfam" id="NF010213">
    <property type="entry name" value="PRK13677.1"/>
    <property type="match status" value="1"/>
</dbReference>
<dbReference type="Pfam" id="PF11944">
    <property type="entry name" value="DUF3461"/>
    <property type="match status" value="1"/>
</dbReference>
<accession>B1LGW6</accession>
<gene>
    <name evidence="1" type="primary">yaeH</name>
    <name type="ordered locus">EcSMS35_0175</name>
</gene>
<comment type="similarity">
    <text evidence="1">Belongs to the UPF0325 family.</text>
</comment>
<reference key="1">
    <citation type="journal article" date="2008" name="J. Bacteriol.">
        <title>Insights into the environmental resistance gene pool from the genome sequence of the multidrug-resistant environmental isolate Escherichia coli SMS-3-5.</title>
        <authorList>
            <person name="Fricke W.F."/>
            <person name="Wright M.S."/>
            <person name="Lindell A.H."/>
            <person name="Harkins D.M."/>
            <person name="Baker-Austin C."/>
            <person name="Ravel J."/>
            <person name="Stepanauskas R."/>
        </authorList>
    </citation>
    <scope>NUCLEOTIDE SEQUENCE [LARGE SCALE GENOMIC DNA]</scope>
    <source>
        <strain>SMS-3-5 / SECEC</strain>
    </source>
</reference>
<evidence type="ECO:0000255" key="1">
    <source>
        <dbReference type="HAMAP-Rule" id="MF_01519"/>
    </source>
</evidence>
<sequence>MYDNLKSLGITNPEEIDRYSLRQEANNDILKIYFQKDKGEFFAKSVKFKYPRQRKTVVADGVGQGYKEVQEISPNLRYIIDELDQICQRDRSEVDLKRKILDDLRHLESVVTNKISEIEADLEKLTRK</sequence>
<name>YAEH_ECOSM</name>
<organism>
    <name type="scientific">Escherichia coli (strain SMS-3-5 / SECEC)</name>
    <dbReference type="NCBI Taxonomy" id="439855"/>
    <lineage>
        <taxon>Bacteria</taxon>
        <taxon>Pseudomonadati</taxon>
        <taxon>Pseudomonadota</taxon>
        <taxon>Gammaproteobacteria</taxon>
        <taxon>Enterobacterales</taxon>
        <taxon>Enterobacteriaceae</taxon>
        <taxon>Escherichia</taxon>
    </lineage>
</organism>
<protein>
    <recommendedName>
        <fullName evidence="1">UPF0325 protein YaeH</fullName>
    </recommendedName>
</protein>
<proteinExistence type="inferred from homology"/>
<feature type="chain" id="PRO_1000198426" description="UPF0325 protein YaeH">
    <location>
        <begin position="1"/>
        <end position="128"/>
    </location>
</feature>